<dbReference type="EMBL" id="AM421808">
    <property type="protein sequence ID" value="CAM09367.1"/>
    <property type="molecule type" value="Genomic_DNA"/>
</dbReference>
<dbReference type="RefSeq" id="WP_002215274.1">
    <property type="nucleotide sequence ID" value="NC_008767.1"/>
</dbReference>
<dbReference type="SMR" id="A1KR91"/>
<dbReference type="GeneID" id="93387140"/>
<dbReference type="KEGG" id="nmc:NMC0043"/>
<dbReference type="HOGENOM" id="CLU_017633_0_7_4"/>
<dbReference type="Proteomes" id="UP000002286">
    <property type="component" value="Chromosome"/>
</dbReference>
<dbReference type="GO" id="GO:0005737">
    <property type="term" value="C:cytoplasm"/>
    <property type="evidence" value="ECO:0007669"/>
    <property type="project" value="UniProtKB-SubCell"/>
</dbReference>
<dbReference type="GO" id="GO:0005524">
    <property type="term" value="F:ATP binding"/>
    <property type="evidence" value="ECO:0007669"/>
    <property type="project" value="InterPro"/>
</dbReference>
<dbReference type="GO" id="GO:0031072">
    <property type="term" value="F:heat shock protein binding"/>
    <property type="evidence" value="ECO:0007669"/>
    <property type="project" value="InterPro"/>
</dbReference>
<dbReference type="GO" id="GO:0051082">
    <property type="term" value="F:unfolded protein binding"/>
    <property type="evidence" value="ECO:0007669"/>
    <property type="project" value="UniProtKB-UniRule"/>
</dbReference>
<dbReference type="GO" id="GO:0008270">
    <property type="term" value="F:zinc ion binding"/>
    <property type="evidence" value="ECO:0007669"/>
    <property type="project" value="UniProtKB-UniRule"/>
</dbReference>
<dbReference type="GO" id="GO:0051085">
    <property type="term" value="P:chaperone cofactor-dependent protein refolding"/>
    <property type="evidence" value="ECO:0007669"/>
    <property type="project" value="TreeGrafter"/>
</dbReference>
<dbReference type="GO" id="GO:0006260">
    <property type="term" value="P:DNA replication"/>
    <property type="evidence" value="ECO:0007669"/>
    <property type="project" value="UniProtKB-KW"/>
</dbReference>
<dbReference type="GO" id="GO:0042026">
    <property type="term" value="P:protein refolding"/>
    <property type="evidence" value="ECO:0007669"/>
    <property type="project" value="TreeGrafter"/>
</dbReference>
<dbReference type="GO" id="GO:0009408">
    <property type="term" value="P:response to heat"/>
    <property type="evidence" value="ECO:0007669"/>
    <property type="project" value="InterPro"/>
</dbReference>
<dbReference type="CDD" id="cd06257">
    <property type="entry name" value="DnaJ"/>
    <property type="match status" value="1"/>
</dbReference>
<dbReference type="CDD" id="cd10747">
    <property type="entry name" value="DnaJ_C"/>
    <property type="match status" value="1"/>
</dbReference>
<dbReference type="CDD" id="cd10719">
    <property type="entry name" value="DnaJ_zf"/>
    <property type="match status" value="1"/>
</dbReference>
<dbReference type="FunFam" id="1.10.287.110:FF:000099">
    <property type="entry name" value="Chaperone protein DnaJ"/>
    <property type="match status" value="1"/>
</dbReference>
<dbReference type="FunFam" id="2.10.230.10:FF:000002">
    <property type="entry name" value="Molecular chaperone DnaJ"/>
    <property type="match status" value="1"/>
</dbReference>
<dbReference type="FunFam" id="2.60.260.20:FF:000004">
    <property type="entry name" value="Molecular chaperone DnaJ"/>
    <property type="match status" value="1"/>
</dbReference>
<dbReference type="Gene3D" id="1.10.287.110">
    <property type="entry name" value="DnaJ domain"/>
    <property type="match status" value="1"/>
</dbReference>
<dbReference type="Gene3D" id="2.10.230.10">
    <property type="entry name" value="Heat shock protein DnaJ, cysteine-rich domain"/>
    <property type="match status" value="1"/>
</dbReference>
<dbReference type="Gene3D" id="2.60.260.20">
    <property type="entry name" value="Urease metallochaperone UreE, N-terminal domain"/>
    <property type="match status" value="2"/>
</dbReference>
<dbReference type="HAMAP" id="MF_01152">
    <property type="entry name" value="DnaJ"/>
    <property type="match status" value="1"/>
</dbReference>
<dbReference type="InterPro" id="IPR012724">
    <property type="entry name" value="DnaJ"/>
</dbReference>
<dbReference type="InterPro" id="IPR002939">
    <property type="entry name" value="DnaJ_C"/>
</dbReference>
<dbReference type="InterPro" id="IPR001623">
    <property type="entry name" value="DnaJ_domain"/>
</dbReference>
<dbReference type="InterPro" id="IPR018253">
    <property type="entry name" value="DnaJ_domain_CS"/>
</dbReference>
<dbReference type="InterPro" id="IPR008971">
    <property type="entry name" value="HSP40/DnaJ_pept-bd"/>
</dbReference>
<dbReference type="InterPro" id="IPR001305">
    <property type="entry name" value="HSP_DnaJ_Cys-rich_dom"/>
</dbReference>
<dbReference type="InterPro" id="IPR036410">
    <property type="entry name" value="HSP_DnaJ_Cys-rich_dom_sf"/>
</dbReference>
<dbReference type="InterPro" id="IPR036869">
    <property type="entry name" value="J_dom_sf"/>
</dbReference>
<dbReference type="NCBIfam" id="TIGR02349">
    <property type="entry name" value="DnaJ_bact"/>
    <property type="match status" value="1"/>
</dbReference>
<dbReference type="NCBIfam" id="NF008035">
    <property type="entry name" value="PRK10767.1"/>
    <property type="match status" value="1"/>
</dbReference>
<dbReference type="PANTHER" id="PTHR43096:SF48">
    <property type="entry name" value="CHAPERONE PROTEIN DNAJ"/>
    <property type="match status" value="1"/>
</dbReference>
<dbReference type="PANTHER" id="PTHR43096">
    <property type="entry name" value="DNAJ HOMOLOG 1, MITOCHONDRIAL-RELATED"/>
    <property type="match status" value="1"/>
</dbReference>
<dbReference type="Pfam" id="PF00226">
    <property type="entry name" value="DnaJ"/>
    <property type="match status" value="1"/>
</dbReference>
<dbReference type="Pfam" id="PF01556">
    <property type="entry name" value="DnaJ_C"/>
    <property type="match status" value="1"/>
</dbReference>
<dbReference type="Pfam" id="PF00684">
    <property type="entry name" value="DnaJ_CXXCXGXG"/>
    <property type="match status" value="1"/>
</dbReference>
<dbReference type="PRINTS" id="PR00625">
    <property type="entry name" value="JDOMAIN"/>
</dbReference>
<dbReference type="SMART" id="SM00271">
    <property type="entry name" value="DnaJ"/>
    <property type="match status" value="1"/>
</dbReference>
<dbReference type="SUPFAM" id="SSF46565">
    <property type="entry name" value="Chaperone J-domain"/>
    <property type="match status" value="1"/>
</dbReference>
<dbReference type="SUPFAM" id="SSF57938">
    <property type="entry name" value="DnaJ/Hsp40 cysteine-rich domain"/>
    <property type="match status" value="1"/>
</dbReference>
<dbReference type="SUPFAM" id="SSF49493">
    <property type="entry name" value="HSP40/DnaJ peptide-binding domain"/>
    <property type="match status" value="2"/>
</dbReference>
<dbReference type="PROSITE" id="PS00636">
    <property type="entry name" value="DNAJ_1"/>
    <property type="match status" value="1"/>
</dbReference>
<dbReference type="PROSITE" id="PS50076">
    <property type="entry name" value="DNAJ_2"/>
    <property type="match status" value="1"/>
</dbReference>
<dbReference type="PROSITE" id="PS51188">
    <property type="entry name" value="ZF_CR"/>
    <property type="match status" value="1"/>
</dbReference>
<evidence type="ECO:0000255" key="1">
    <source>
        <dbReference type="HAMAP-Rule" id="MF_01152"/>
    </source>
</evidence>
<protein>
    <recommendedName>
        <fullName evidence="1">Chaperone protein DnaJ</fullName>
    </recommendedName>
</protein>
<accession>A1KR91</accession>
<feature type="chain" id="PRO_1000085232" description="Chaperone protein DnaJ">
    <location>
        <begin position="1"/>
        <end position="373"/>
    </location>
</feature>
<feature type="domain" description="J" evidence="1">
    <location>
        <begin position="5"/>
        <end position="70"/>
    </location>
</feature>
<feature type="repeat" description="CXXCXGXG motif">
    <location>
        <begin position="147"/>
        <end position="154"/>
    </location>
</feature>
<feature type="repeat" description="CXXCXGXG motif">
    <location>
        <begin position="164"/>
        <end position="171"/>
    </location>
</feature>
<feature type="repeat" description="CXXCXGXG motif">
    <location>
        <begin position="186"/>
        <end position="193"/>
    </location>
</feature>
<feature type="repeat" description="CXXCXGXG motif">
    <location>
        <begin position="200"/>
        <end position="207"/>
    </location>
</feature>
<feature type="zinc finger region" description="CR-type" evidence="1">
    <location>
        <begin position="134"/>
        <end position="212"/>
    </location>
</feature>
<feature type="binding site" evidence="1">
    <location>
        <position position="147"/>
    </location>
    <ligand>
        <name>Zn(2+)</name>
        <dbReference type="ChEBI" id="CHEBI:29105"/>
        <label>1</label>
    </ligand>
</feature>
<feature type="binding site" evidence="1">
    <location>
        <position position="150"/>
    </location>
    <ligand>
        <name>Zn(2+)</name>
        <dbReference type="ChEBI" id="CHEBI:29105"/>
        <label>1</label>
    </ligand>
</feature>
<feature type="binding site" evidence="1">
    <location>
        <position position="164"/>
    </location>
    <ligand>
        <name>Zn(2+)</name>
        <dbReference type="ChEBI" id="CHEBI:29105"/>
        <label>2</label>
    </ligand>
</feature>
<feature type="binding site" evidence="1">
    <location>
        <position position="167"/>
    </location>
    <ligand>
        <name>Zn(2+)</name>
        <dbReference type="ChEBI" id="CHEBI:29105"/>
        <label>2</label>
    </ligand>
</feature>
<feature type="binding site" evidence="1">
    <location>
        <position position="186"/>
    </location>
    <ligand>
        <name>Zn(2+)</name>
        <dbReference type="ChEBI" id="CHEBI:29105"/>
        <label>2</label>
    </ligand>
</feature>
<feature type="binding site" evidence="1">
    <location>
        <position position="189"/>
    </location>
    <ligand>
        <name>Zn(2+)</name>
        <dbReference type="ChEBI" id="CHEBI:29105"/>
        <label>2</label>
    </ligand>
</feature>
<feature type="binding site" evidence="1">
    <location>
        <position position="200"/>
    </location>
    <ligand>
        <name>Zn(2+)</name>
        <dbReference type="ChEBI" id="CHEBI:29105"/>
        <label>1</label>
    </ligand>
</feature>
<feature type="binding site" evidence="1">
    <location>
        <position position="203"/>
    </location>
    <ligand>
        <name>Zn(2+)</name>
        <dbReference type="ChEBI" id="CHEBI:29105"/>
        <label>1</label>
    </ligand>
</feature>
<gene>
    <name evidence="1" type="primary">dnaJ</name>
    <name type="ordered locus">NMC0043</name>
</gene>
<sequence length="373" mass="40585">MSNQDFYATLGVARTATDDEIKKAYRKLAMKYHPDRNPDNKEAEEKFKEVQKAYETLSDKEKRAMYDQYGHAAFEGGGQGGFGGFGGFGGAQGFDFGDIFSQMFGGGSGRAQPDYQGEDVQVGIEITLEEAAKGVKKRINIPTYEACDVCNGSGAKPGTSPETCPTCKGSGTVHIQQAIFRMQQTCPTCHGAGKHIKEPCVKCRGAGRNKAVKTVEVNIPAGIDDGQRIRLSGEGGPGMHGAPAGDLYVTVRIRAHKIFQRDGLDLHCELPISFATAALGGELEVPTLDGKVKLTVPKETQTGRRMRVKGKGVKSLRSSATGDLYCHIVVETPVNLTDRQKELLEEFERISTGLENQTPRKKSFLDKLRDLFD</sequence>
<name>DNAJ_NEIMF</name>
<keyword id="KW-0143">Chaperone</keyword>
<keyword id="KW-0963">Cytoplasm</keyword>
<keyword id="KW-0235">DNA replication</keyword>
<keyword id="KW-0479">Metal-binding</keyword>
<keyword id="KW-0677">Repeat</keyword>
<keyword id="KW-0346">Stress response</keyword>
<keyword id="KW-0862">Zinc</keyword>
<keyword id="KW-0863">Zinc-finger</keyword>
<comment type="function">
    <text evidence="1">Participates actively in the response to hyperosmotic and heat shock by preventing the aggregation of stress-denatured proteins and by disaggregating proteins, also in an autonomous, DnaK-independent fashion. Unfolded proteins bind initially to DnaJ; upon interaction with the DnaJ-bound protein, DnaK hydrolyzes its bound ATP, resulting in the formation of a stable complex. GrpE releases ADP from DnaK; ATP binding to DnaK triggers the release of the substrate protein, thus completing the reaction cycle. Several rounds of ATP-dependent interactions between DnaJ, DnaK and GrpE are required for fully efficient folding. Also involved, together with DnaK and GrpE, in the DNA replication of plasmids through activation of initiation proteins.</text>
</comment>
<comment type="cofactor">
    <cofactor evidence="1">
        <name>Zn(2+)</name>
        <dbReference type="ChEBI" id="CHEBI:29105"/>
    </cofactor>
    <text evidence="1">Binds 2 Zn(2+) ions per monomer.</text>
</comment>
<comment type="subunit">
    <text evidence="1">Homodimer.</text>
</comment>
<comment type="subcellular location">
    <subcellularLocation>
        <location evidence="1">Cytoplasm</location>
    </subcellularLocation>
</comment>
<comment type="domain">
    <text evidence="1">The J domain is necessary and sufficient to stimulate DnaK ATPase activity. Zinc center 1 plays an important role in the autonomous, DnaK-independent chaperone activity of DnaJ. Zinc center 2 is essential for interaction with DnaK and for DnaJ activity.</text>
</comment>
<comment type="similarity">
    <text evidence="1">Belongs to the DnaJ family.</text>
</comment>
<reference key="1">
    <citation type="journal article" date="2007" name="PLoS Genet.">
        <title>Meningococcal genetic variation mechanisms viewed through comparative analysis of serogroup C strain FAM18.</title>
        <authorList>
            <person name="Bentley S.D."/>
            <person name="Vernikos G.S."/>
            <person name="Snyder L.A.S."/>
            <person name="Churcher C."/>
            <person name="Arrowsmith C."/>
            <person name="Chillingworth T."/>
            <person name="Cronin A."/>
            <person name="Davis P.H."/>
            <person name="Holroyd N.E."/>
            <person name="Jagels K."/>
            <person name="Maddison M."/>
            <person name="Moule S."/>
            <person name="Rabbinowitsch E."/>
            <person name="Sharp S."/>
            <person name="Unwin L."/>
            <person name="Whitehead S."/>
            <person name="Quail M.A."/>
            <person name="Achtman M."/>
            <person name="Barrell B.G."/>
            <person name="Saunders N.J."/>
            <person name="Parkhill J."/>
        </authorList>
    </citation>
    <scope>NUCLEOTIDE SEQUENCE [LARGE SCALE GENOMIC DNA]</scope>
    <source>
        <strain>ATCC 700532 / DSM 15464 / FAM18</strain>
    </source>
</reference>
<organism>
    <name type="scientific">Neisseria meningitidis serogroup C / serotype 2a (strain ATCC 700532 / DSM 15464 / FAM18)</name>
    <dbReference type="NCBI Taxonomy" id="272831"/>
    <lineage>
        <taxon>Bacteria</taxon>
        <taxon>Pseudomonadati</taxon>
        <taxon>Pseudomonadota</taxon>
        <taxon>Betaproteobacteria</taxon>
        <taxon>Neisseriales</taxon>
        <taxon>Neisseriaceae</taxon>
        <taxon>Neisseria</taxon>
    </lineage>
</organism>
<proteinExistence type="inferred from homology"/>